<gene>
    <name evidence="1" type="primary">hisC</name>
    <name type="ordered locus">TTE2137</name>
</gene>
<proteinExistence type="evidence at protein level"/>
<reference key="1">
    <citation type="journal article" date="2002" name="Genome Res.">
        <title>A complete sequence of the T. tengcongensis genome.</title>
        <authorList>
            <person name="Bao Q."/>
            <person name="Tian Y."/>
            <person name="Li W."/>
            <person name="Xu Z."/>
            <person name="Xuan Z."/>
            <person name="Hu S."/>
            <person name="Dong W."/>
            <person name="Yang J."/>
            <person name="Chen Y."/>
            <person name="Xue Y."/>
            <person name="Xu Y."/>
            <person name="Lai X."/>
            <person name="Huang L."/>
            <person name="Dong X."/>
            <person name="Ma Y."/>
            <person name="Ling L."/>
            <person name="Tan H."/>
            <person name="Chen R."/>
            <person name="Wang J."/>
            <person name="Yu J."/>
            <person name="Yang H."/>
        </authorList>
    </citation>
    <scope>NUCLEOTIDE SEQUENCE [LARGE SCALE GENOMIC DNA]</scope>
    <source>
        <strain>DSM 15242 / JCM 11007 / NBRC 100824 / MB4</strain>
    </source>
</reference>
<reference key="2">
    <citation type="journal article" date="2012" name="Mol. Syst. Biol.">
        <title>Prediction and identification of sequences coding for orphan enzymes using genomic and metagenomic neighbours.</title>
        <authorList>
            <person name="Yamada T."/>
            <person name="Waller A.S."/>
            <person name="Raes J."/>
            <person name="Zelezniak A."/>
            <person name="Perchat N."/>
            <person name="Perret A."/>
            <person name="Salanoubat M."/>
            <person name="Patil K.R."/>
            <person name="Weissenbach J."/>
            <person name="Bork P."/>
        </authorList>
    </citation>
    <scope>CATALYTIC ACTIVITY</scope>
    <scope>COFACTOR</scope>
    <source>
        <strain>DSM 15242 / JCM 11007 / NBRC 100824 / MB4</strain>
    </source>
</reference>
<dbReference type="EC" id="2.6.1.9" evidence="1"/>
<dbReference type="EC" id="2.6.1.38" evidence="2"/>
<dbReference type="EMBL" id="AE008691">
    <property type="protein sequence ID" value="AAM25302.1"/>
    <property type="molecule type" value="Genomic_DNA"/>
</dbReference>
<dbReference type="RefSeq" id="WP_009610408.1">
    <property type="nucleotide sequence ID" value="NC_003869.1"/>
</dbReference>
<dbReference type="SMR" id="Q8R5Q4"/>
<dbReference type="STRING" id="273068.TTE2137"/>
<dbReference type="KEGG" id="tte:TTE2137"/>
<dbReference type="eggNOG" id="COG0079">
    <property type="taxonomic scope" value="Bacteria"/>
</dbReference>
<dbReference type="HOGENOM" id="CLU_017584_3_1_9"/>
<dbReference type="OrthoDB" id="9813612at2"/>
<dbReference type="BRENDA" id="2.6.1.38">
    <property type="organism ID" value="6784"/>
</dbReference>
<dbReference type="UniPathway" id="UPA00031">
    <property type="reaction ID" value="UER00012"/>
</dbReference>
<dbReference type="Proteomes" id="UP000000555">
    <property type="component" value="Chromosome"/>
</dbReference>
<dbReference type="GO" id="GO:0004400">
    <property type="term" value="F:histidinol-phosphate transaminase activity"/>
    <property type="evidence" value="ECO:0007669"/>
    <property type="project" value="UniProtKB-UniRule"/>
</dbReference>
<dbReference type="GO" id="GO:0008110">
    <property type="term" value="F:L-histidine:2-oxoglutarate aminotransferase activity"/>
    <property type="evidence" value="ECO:0000314"/>
    <property type="project" value="UniProtKB"/>
</dbReference>
<dbReference type="GO" id="GO:0030170">
    <property type="term" value="F:pyridoxal phosphate binding"/>
    <property type="evidence" value="ECO:0007669"/>
    <property type="project" value="InterPro"/>
</dbReference>
<dbReference type="GO" id="GO:0000105">
    <property type="term" value="P:L-histidine biosynthetic process"/>
    <property type="evidence" value="ECO:0007669"/>
    <property type="project" value="UniProtKB-UniRule"/>
</dbReference>
<dbReference type="CDD" id="cd00609">
    <property type="entry name" value="AAT_like"/>
    <property type="match status" value="1"/>
</dbReference>
<dbReference type="Gene3D" id="3.90.1150.10">
    <property type="entry name" value="Aspartate Aminotransferase, domain 1"/>
    <property type="match status" value="1"/>
</dbReference>
<dbReference type="Gene3D" id="3.40.640.10">
    <property type="entry name" value="Type I PLP-dependent aspartate aminotransferase-like (Major domain)"/>
    <property type="match status" value="1"/>
</dbReference>
<dbReference type="HAMAP" id="MF_01023">
    <property type="entry name" value="HisC_aminotrans_2"/>
    <property type="match status" value="1"/>
</dbReference>
<dbReference type="InterPro" id="IPR001917">
    <property type="entry name" value="Aminotrans_II_pyridoxalP_BS"/>
</dbReference>
<dbReference type="InterPro" id="IPR004839">
    <property type="entry name" value="Aminotransferase_I/II_large"/>
</dbReference>
<dbReference type="InterPro" id="IPR005861">
    <property type="entry name" value="HisP_aminotrans"/>
</dbReference>
<dbReference type="InterPro" id="IPR015424">
    <property type="entry name" value="PyrdxlP-dep_Trfase"/>
</dbReference>
<dbReference type="InterPro" id="IPR015421">
    <property type="entry name" value="PyrdxlP-dep_Trfase_major"/>
</dbReference>
<dbReference type="InterPro" id="IPR015422">
    <property type="entry name" value="PyrdxlP-dep_Trfase_small"/>
</dbReference>
<dbReference type="NCBIfam" id="TIGR01141">
    <property type="entry name" value="hisC"/>
    <property type="match status" value="1"/>
</dbReference>
<dbReference type="PANTHER" id="PTHR42885:SF2">
    <property type="entry name" value="HISTIDINOL-PHOSPHATE AMINOTRANSFERASE"/>
    <property type="match status" value="1"/>
</dbReference>
<dbReference type="PANTHER" id="PTHR42885">
    <property type="entry name" value="HISTIDINOL-PHOSPHATE AMINOTRANSFERASE-RELATED"/>
    <property type="match status" value="1"/>
</dbReference>
<dbReference type="Pfam" id="PF00155">
    <property type="entry name" value="Aminotran_1_2"/>
    <property type="match status" value="1"/>
</dbReference>
<dbReference type="SUPFAM" id="SSF53383">
    <property type="entry name" value="PLP-dependent transferases"/>
    <property type="match status" value="1"/>
</dbReference>
<dbReference type="PROSITE" id="PS00599">
    <property type="entry name" value="AA_TRANSFER_CLASS_2"/>
    <property type="match status" value="1"/>
</dbReference>
<accession>Q8R5Q4</accession>
<comment type="catalytic activity">
    <reaction evidence="1">
        <text>L-histidinol phosphate + 2-oxoglutarate = 3-(imidazol-4-yl)-2-oxopropyl phosphate + L-glutamate</text>
        <dbReference type="Rhea" id="RHEA:23744"/>
        <dbReference type="ChEBI" id="CHEBI:16810"/>
        <dbReference type="ChEBI" id="CHEBI:29985"/>
        <dbReference type="ChEBI" id="CHEBI:57766"/>
        <dbReference type="ChEBI" id="CHEBI:57980"/>
        <dbReference type="EC" id="2.6.1.9"/>
    </reaction>
</comment>
<comment type="catalytic activity">
    <reaction evidence="2">
        <text>L-histidine + 2-oxoglutarate = 3-(imidazol-5-yl)pyruvate + L-glutamate</text>
        <dbReference type="Rhea" id="RHEA:16565"/>
        <dbReference type="ChEBI" id="CHEBI:16810"/>
        <dbReference type="ChEBI" id="CHEBI:29985"/>
        <dbReference type="ChEBI" id="CHEBI:57595"/>
        <dbReference type="ChEBI" id="CHEBI:58133"/>
        <dbReference type="EC" id="2.6.1.38"/>
    </reaction>
</comment>
<comment type="cofactor">
    <cofactor evidence="1 4">
        <name>pyridoxal 5'-phosphate</name>
        <dbReference type="ChEBI" id="CHEBI:597326"/>
    </cofactor>
</comment>
<comment type="pathway">
    <text evidence="1">Amino-acid biosynthesis; L-histidine biosynthesis; L-histidine from 5-phospho-alpha-D-ribose 1-diphosphate: step 7/9.</text>
</comment>
<comment type="subunit">
    <text evidence="1">Homodimer.</text>
</comment>
<comment type="similarity">
    <text evidence="1">Belongs to the class-II pyridoxal-phosphate-dependent aminotransferase family. Histidinol-phosphate aminotransferase subfamily.</text>
</comment>
<name>HIS8_CALS4</name>
<organism>
    <name type="scientific">Caldanaerobacter subterraneus subsp. tengcongensis (strain DSM 15242 / JCM 11007 / NBRC 100824 / MB4)</name>
    <name type="common">Thermoanaerobacter tengcongensis</name>
    <dbReference type="NCBI Taxonomy" id="273068"/>
    <lineage>
        <taxon>Bacteria</taxon>
        <taxon>Bacillati</taxon>
        <taxon>Bacillota</taxon>
        <taxon>Clostridia</taxon>
        <taxon>Thermoanaerobacterales</taxon>
        <taxon>Thermoanaerobacteraceae</taxon>
        <taxon>Caldanaerobacter</taxon>
    </lineage>
</organism>
<sequence>MIENLLREEIKGFKNYEVENVPYKYKMDANETPFELPEEVMKNIGDIVKSIHVNIYPDPTAEKLREELARYCSVTPKNIFVGNGSDEIIHLIMLAFVDKGDTVLYPHPSFAMYSIYSKIAGANEIAVNLNEDYTYNVERFAEAVERYKPKLVFLCNPNNPTGSVIDEEDIIRIIEKARGIVIVDEAYFEFYGKTLVPYIDRFENLIVLRTLSKAFGIAGLRVGYALSNGEIVKYLNLVKSPYNLNSLSQRIALEVLKSGVLKERVNYIINEREKLVKELNKINGIKVYPSHANFVLCKFENANDVHKRLVERGILVRNFSNVKGLEGTLRITVSSSDANDYLINALREILS</sequence>
<protein>
    <recommendedName>
        <fullName evidence="1">Histidinol-phosphate aminotransferase</fullName>
        <ecNumber evidence="1">2.6.1.9</ecNumber>
    </recommendedName>
    <alternativeName>
        <fullName evidence="3">Histidine transaminase</fullName>
        <ecNumber evidence="2">2.6.1.38</ecNumber>
    </alternativeName>
    <alternativeName>
        <fullName evidence="1">Imidazole acetol-phosphate transaminase</fullName>
    </alternativeName>
</protein>
<evidence type="ECO:0000255" key="1">
    <source>
        <dbReference type="HAMAP-Rule" id="MF_01023"/>
    </source>
</evidence>
<evidence type="ECO:0000269" key="2">
    <source>
    </source>
</evidence>
<evidence type="ECO:0000303" key="3">
    <source>
    </source>
</evidence>
<evidence type="ECO:0000305" key="4">
    <source>
    </source>
</evidence>
<feature type="chain" id="PRO_0000153468" description="Histidinol-phosphate aminotransferase">
    <location>
        <begin position="1"/>
        <end position="351"/>
    </location>
</feature>
<feature type="modified residue" description="N6-(pyridoxal phosphate)lysine" evidence="1">
    <location>
        <position position="213"/>
    </location>
</feature>
<keyword id="KW-0028">Amino-acid biosynthesis</keyword>
<keyword id="KW-0032">Aminotransferase</keyword>
<keyword id="KW-0368">Histidine biosynthesis</keyword>
<keyword id="KW-0663">Pyridoxal phosphate</keyword>
<keyword id="KW-1185">Reference proteome</keyword>
<keyword id="KW-0808">Transferase</keyword>